<gene>
    <name type="primary">AANAT</name>
    <name type="synonym">SNAT</name>
</gene>
<name>SNAT_PANTR</name>
<protein>
    <recommendedName>
        <fullName>Serotonin N-acetyltransferase</fullName>
        <shortName>Serotonin acetylase</shortName>
        <ecNumber evidence="4">2.3.1.87</ecNumber>
    </recommendedName>
    <alternativeName>
        <fullName>Aralkylamine N-acetyltransferase</fullName>
        <shortName>AA-NAT</shortName>
    </alternativeName>
</protein>
<proteinExistence type="evidence at transcript level"/>
<feature type="chain" id="PRO_0000074584" description="Serotonin N-acetyltransferase">
    <location>
        <begin position="1"/>
        <end position="207"/>
    </location>
</feature>
<feature type="domain" description="N-acetyltransferase" evidence="5">
    <location>
        <begin position="35"/>
        <end position="202"/>
    </location>
</feature>
<feature type="region of interest" description="Disordered" evidence="6">
    <location>
        <begin position="1"/>
        <end position="28"/>
    </location>
</feature>
<feature type="binding site" evidence="4">
    <location>
        <begin position="124"/>
        <end position="126"/>
    </location>
    <ligand>
        <name>acetyl-CoA</name>
        <dbReference type="ChEBI" id="CHEBI:57288"/>
    </ligand>
</feature>
<feature type="binding site" evidence="4">
    <location>
        <position position="124"/>
    </location>
    <ligand>
        <name>substrate</name>
    </ligand>
</feature>
<feature type="binding site" evidence="4">
    <location>
        <begin position="132"/>
        <end position="137"/>
    </location>
    <ligand>
        <name>acetyl-CoA</name>
        <dbReference type="ChEBI" id="CHEBI:57288"/>
    </ligand>
</feature>
<feature type="binding site" evidence="4">
    <location>
        <position position="159"/>
    </location>
    <ligand>
        <name>substrate</name>
    </ligand>
</feature>
<feature type="binding site" evidence="4">
    <location>
        <begin position="168"/>
        <end position="170"/>
    </location>
    <ligand>
        <name>acetyl-CoA</name>
        <dbReference type="ChEBI" id="CHEBI:57288"/>
    </ligand>
</feature>
<feature type="site" description="Important for the catalytic mechanism; involved in substrate deprotonation" evidence="4">
    <location>
        <position position="120"/>
    </location>
</feature>
<feature type="site" description="Important for the catalytic mechanism; involved in substrate deprotonation" evidence="4">
    <location>
        <position position="122"/>
    </location>
</feature>
<feature type="modified residue" description="Phosphothreonine; by PKA" evidence="2">
    <location>
        <position position="31"/>
    </location>
</feature>
<feature type="modified residue" description="Phosphoserine" evidence="4">
    <location>
        <position position="205"/>
    </location>
</feature>
<evidence type="ECO:0000250" key="1"/>
<evidence type="ECO:0000250" key="2">
    <source>
        <dbReference type="UniProtKB" id="O97756"/>
    </source>
</evidence>
<evidence type="ECO:0000250" key="3">
    <source>
        <dbReference type="UniProtKB" id="Q16613"/>
    </source>
</evidence>
<evidence type="ECO:0000250" key="4">
    <source>
        <dbReference type="UniProtKB" id="Q29495"/>
    </source>
</evidence>
<evidence type="ECO:0000255" key="5">
    <source>
        <dbReference type="PROSITE-ProRule" id="PRU00532"/>
    </source>
</evidence>
<evidence type="ECO:0000256" key="6">
    <source>
        <dbReference type="SAM" id="MobiDB-lite"/>
    </source>
</evidence>
<evidence type="ECO:0000305" key="7"/>
<comment type="function">
    <text evidence="4">Controls the night/day rhythm of melatonin production in the pineal gland. Catalyzes the N-acetylation of serotonin into N-acetylserotonin, the penultimate step in the synthesis of melatonin (By similarity).</text>
</comment>
<comment type="catalytic activity">
    <reaction evidence="4">
        <text>a 2-arylethylamine + acetyl-CoA = an N-acetyl-2-arylethylamine + CoA + H(+)</text>
        <dbReference type="Rhea" id="RHEA:20497"/>
        <dbReference type="ChEBI" id="CHEBI:15378"/>
        <dbReference type="ChEBI" id="CHEBI:55469"/>
        <dbReference type="ChEBI" id="CHEBI:57287"/>
        <dbReference type="ChEBI" id="CHEBI:57288"/>
        <dbReference type="ChEBI" id="CHEBI:77827"/>
        <dbReference type="EC" id="2.3.1.87"/>
    </reaction>
</comment>
<comment type="pathway">
    <text>Aromatic compound metabolism; melatonin biosynthesis; melatonin from serotonin: step 1/2.</text>
</comment>
<comment type="subunit">
    <text evidence="1">Monomer (By similarity). Interacts with several 14-3-3 proteins, including YWHAB, YWHAE, YWHAG and YWHAZ, preferentially when phosphorylated at Thr-31 (By similarity). Phosphorylation on Ser-205 also allows binding to YWHAZ, but with lower affinity (By similarity). The interaction with YWHAZ considerably increases affinity for arylalkylamines and acetyl-CoA and protects the enzyme from dephosphorylation and proteasomal degradation. It may also prevent thiol-dependent inactivation (By similarity).</text>
</comment>
<comment type="subcellular location">
    <subcellularLocation>
        <location evidence="3">Cytoplasm</location>
    </subcellularLocation>
</comment>
<comment type="PTM">
    <text evidence="1">cAMP-dependent phosphorylation on both N-terminal Thr-31 and C-terminal Ser-205 regulates AANAT activity by promoting interaction with 14-3-3 proteins.</text>
</comment>
<comment type="similarity">
    <text evidence="7">Belongs to the acetyltransferase family. AANAT subfamily.</text>
</comment>
<reference key="1">
    <citation type="journal article" date="2004" name="Cell">
        <title>Accelerated evolution of nervous system genes in the origin of Homo sapiens.</title>
        <authorList>
            <person name="Dorus S."/>
            <person name="Vallender E.J."/>
            <person name="Evans P.D."/>
            <person name="Anderson J.R."/>
            <person name="Gilbert S.L."/>
            <person name="Mahowald M."/>
            <person name="Wyckoff G.J."/>
            <person name="Malcom C.M."/>
            <person name="Lahn B.T."/>
        </authorList>
    </citation>
    <scope>NUCLEOTIDE SEQUENCE [MRNA]</scope>
</reference>
<organism>
    <name type="scientific">Pan troglodytes</name>
    <name type="common">Chimpanzee</name>
    <dbReference type="NCBI Taxonomy" id="9598"/>
    <lineage>
        <taxon>Eukaryota</taxon>
        <taxon>Metazoa</taxon>
        <taxon>Chordata</taxon>
        <taxon>Craniata</taxon>
        <taxon>Vertebrata</taxon>
        <taxon>Euteleostomi</taxon>
        <taxon>Mammalia</taxon>
        <taxon>Eutheria</taxon>
        <taxon>Euarchontoglires</taxon>
        <taxon>Primates</taxon>
        <taxon>Haplorrhini</taxon>
        <taxon>Catarrhini</taxon>
        <taxon>Hominidae</taxon>
        <taxon>Pan</taxon>
    </lineage>
</organism>
<sequence>MSMQSTHPPKPEAPRLPPGIPESPSCQRRHTLPASEFRCLTPEDAVSAFEIEREAFISVLGVCPLDLDEIRHFLTLCPELSLGWFEEGCLVAFIIGSLWDKERLMQESLTLHRSGGHIAHLHVLAVHRAFRQQGRGPILLWRYLHHLGSQPAVRRAALMCEDALVPFYERFSFHAVGPCAITVGSLTFTELHCSLRDHPFLRRNSGC</sequence>
<dbReference type="EC" id="2.3.1.87" evidence="4"/>
<dbReference type="EMBL" id="AY665273">
    <property type="protein sequence ID" value="AAV74311.2"/>
    <property type="molecule type" value="mRNA"/>
</dbReference>
<dbReference type="RefSeq" id="NP_001012442.1">
    <property type="nucleotide sequence ID" value="NM_001012440.1"/>
</dbReference>
<dbReference type="RefSeq" id="XP_016786107.1">
    <property type="nucleotide sequence ID" value="XM_016930618.3"/>
</dbReference>
<dbReference type="RefSeq" id="XP_016786108.1">
    <property type="nucleotide sequence ID" value="XM_016930619.1"/>
</dbReference>
<dbReference type="RefSeq" id="XP_063654168.1">
    <property type="nucleotide sequence ID" value="XM_063798098.1"/>
</dbReference>
<dbReference type="SMR" id="Q5IS55"/>
<dbReference type="FunCoup" id="Q5IS55">
    <property type="interactions" value="492"/>
</dbReference>
<dbReference type="STRING" id="9598.ENSPTRP00000016459"/>
<dbReference type="PaxDb" id="9598-ENSPTRP00000016459"/>
<dbReference type="Ensembl" id="ENSPTRT00000017765.4">
    <property type="protein sequence ID" value="ENSPTRP00000016459.3"/>
    <property type="gene ID" value="ENSPTRG00000009682.6"/>
</dbReference>
<dbReference type="GeneID" id="503504"/>
<dbReference type="KEGG" id="ptr:503504"/>
<dbReference type="CTD" id="15"/>
<dbReference type="VGNC" id="VGNC:6317">
    <property type="gene designation" value="AANAT"/>
</dbReference>
<dbReference type="eggNOG" id="KOG4144">
    <property type="taxonomic scope" value="Eukaryota"/>
</dbReference>
<dbReference type="GeneTree" id="ENSGT00390000015579"/>
<dbReference type="HOGENOM" id="CLU_061829_3_1_1"/>
<dbReference type="InParanoid" id="Q5IS55"/>
<dbReference type="OMA" id="AFVEMQH"/>
<dbReference type="TreeFam" id="TF331622"/>
<dbReference type="UniPathway" id="UPA00837">
    <property type="reaction ID" value="UER00815"/>
</dbReference>
<dbReference type="Proteomes" id="UP000002277">
    <property type="component" value="Chromosome 17"/>
</dbReference>
<dbReference type="Bgee" id="ENSPTRG00000009682">
    <property type="expression patterns" value="Expressed in testis and 5 other cell types or tissues"/>
</dbReference>
<dbReference type="GO" id="GO:0005737">
    <property type="term" value="C:cytoplasm"/>
    <property type="evidence" value="ECO:0000318"/>
    <property type="project" value="GO_Central"/>
</dbReference>
<dbReference type="GO" id="GO:0005829">
    <property type="term" value="C:cytosol"/>
    <property type="evidence" value="ECO:0007669"/>
    <property type="project" value="Ensembl"/>
</dbReference>
<dbReference type="GO" id="GO:0048471">
    <property type="term" value="C:perinuclear region of cytoplasm"/>
    <property type="evidence" value="ECO:0000250"/>
    <property type="project" value="UniProtKB"/>
</dbReference>
<dbReference type="GO" id="GO:0004059">
    <property type="term" value="F:aralkylamine N-acetyltransferase activity"/>
    <property type="evidence" value="ECO:0000250"/>
    <property type="project" value="UniProtKB"/>
</dbReference>
<dbReference type="GO" id="GO:0004060">
    <property type="term" value="F:arylamine N-acetyltransferase activity"/>
    <property type="evidence" value="ECO:0007669"/>
    <property type="project" value="Ensembl"/>
</dbReference>
<dbReference type="GO" id="GO:0071320">
    <property type="term" value="P:cellular response to cAMP"/>
    <property type="evidence" value="ECO:0000250"/>
    <property type="project" value="UniProtKB"/>
</dbReference>
<dbReference type="GO" id="GO:0007623">
    <property type="term" value="P:circadian rhythm"/>
    <property type="evidence" value="ECO:0000250"/>
    <property type="project" value="UniProtKB"/>
</dbReference>
<dbReference type="GO" id="GO:0030187">
    <property type="term" value="P:melatonin biosynthetic process"/>
    <property type="evidence" value="ECO:0000250"/>
    <property type="project" value="UniProtKB"/>
</dbReference>
<dbReference type="GO" id="GO:0006474">
    <property type="term" value="P:N-terminal protein amino acid acetylation"/>
    <property type="evidence" value="ECO:0000250"/>
    <property type="project" value="UniProtKB"/>
</dbReference>
<dbReference type="GO" id="GO:0009416">
    <property type="term" value="P:response to light stimulus"/>
    <property type="evidence" value="ECO:0000318"/>
    <property type="project" value="GO_Central"/>
</dbReference>
<dbReference type="CDD" id="cd04301">
    <property type="entry name" value="NAT_SF"/>
    <property type="match status" value="1"/>
</dbReference>
<dbReference type="FunFam" id="3.40.630.30:FF:000021">
    <property type="entry name" value="Serotonin N-acetyltransferase"/>
    <property type="match status" value="1"/>
</dbReference>
<dbReference type="Gene3D" id="3.40.630.30">
    <property type="match status" value="1"/>
</dbReference>
<dbReference type="InterPro" id="IPR016181">
    <property type="entry name" value="Acyl_CoA_acyltransferase"/>
</dbReference>
<dbReference type="InterPro" id="IPR000182">
    <property type="entry name" value="GNAT_dom"/>
</dbReference>
<dbReference type="InterPro" id="IPR051635">
    <property type="entry name" value="SNAT-like"/>
</dbReference>
<dbReference type="PANTHER" id="PTHR10908">
    <property type="entry name" value="SEROTONIN N-ACETYLTRANSFERASE"/>
    <property type="match status" value="1"/>
</dbReference>
<dbReference type="PANTHER" id="PTHR10908:SF0">
    <property type="entry name" value="SEROTONIN N-ACETYLTRANSFERASE"/>
    <property type="match status" value="1"/>
</dbReference>
<dbReference type="Pfam" id="PF00583">
    <property type="entry name" value="Acetyltransf_1"/>
    <property type="match status" value="1"/>
</dbReference>
<dbReference type="SUPFAM" id="SSF55729">
    <property type="entry name" value="Acyl-CoA N-acyltransferases (Nat)"/>
    <property type="match status" value="1"/>
</dbReference>
<dbReference type="PROSITE" id="PS51186">
    <property type="entry name" value="GNAT"/>
    <property type="match status" value="1"/>
</dbReference>
<accession>Q5IS55</accession>
<keyword id="KW-0012">Acyltransferase</keyword>
<keyword id="KW-0090">Biological rhythms</keyword>
<keyword id="KW-0963">Cytoplasm</keyword>
<keyword id="KW-0471">Melatonin biosynthesis</keyword>
<keyword id="KW-0597">Phosphoprotein</keyword>
<keyword id="KW-1185">Reference proteome</keyword>
<keyword id="KW-0808">Transferase</keyword>